<accession>Q2FZ27</accession>
<gene>
    <name evidence="1 9" type="primary">codY</name>
    <name type="ordered locus">SAOUHSC_01228</name>
</gene>
<keyword id="KW-0002">3D-structure</keyword>
<keyword id="KW-0010">Activator</keyword>
<keyword id="KW-0963">Cytoplasm</keyword>
<keyword id="KW-0238">DNA-binding</keyword>
<keyword id="KW-0342">GTP-binding</keyword>
<keyword id="KW-0547">Nucleotide-binding</keyword>
<keyword id="KW-1185">Reference proteome</keyword>
<keyword id="KW-0678">Repressor</keyword>
<keyword id="KW-0804">Transcription</keyword>
<keyword id="KW-0805">Transcription regulation</keyword>
<feature type="chain" id="PRO_1000051543" description="Global transcriptional regulator CodY">
    <location>
        <begin position="1"/>
        <end position="257"/>
    </location>
</feature>
<feature type="DNA-binding region" description="H-T-H motif" evidence="1">
    <location>
        <begin position="203"/>
        <end position="222"/>
    </location>
</feature>
<feature type="region of interest" description="GAF domain" evidence="1">
    <location>
        <begin position="1"/>
        <end position="155"/>
    </location>
</feature>
<comment type="function">
    <text evidence="1 5">DNA-binding global transcriptional regulator which is involved in the adaptive response to starvation and acts by directly or indirectly controlling the expression of numerous genes in response to nutrient availability. During rapid exponential growth, CodY is highly active and represses genes whose products allow adaptation to nutrient depletion.</text>
</comment>
<comment type="function">
    <text evidence="2 3 4 5 6 7 8">In S.aureus, targets include over 200 genes (PubMed:20363936, PubMed:27116338). Acts mainly as a repressor of genes involved in amino acid transport and metabolism, including the branched-chain amino acids (BCAAs) biosynthetic operon (PubMed:19251851, PubMed:20363936, PubMed:27116338, PubMed:29357354). Several genes involved in nucleotide synthesis and transport are activated (PubMed:19251851). Binds to a 21-bp conserved DNA motif, the CodY-binding site (PubMed:20363936). Additionally, in pathogenic bacteria, CodY also regulates virulence gene expression and provides a regulatory link between metabolism and pathogenesis (PubMed:18156263, PubMed:19251851, PubMed:20363936, PubMed:27116338, PubMed:29378891). Genes encoding virulence and defense factors are either up- or down-regulated by CodY (PubMed:19251851). Among others, is involved in the repression of the accessory gene regulator (agr), the hemolytic alpha-toxin (hla) gene, and the icaADBC operon, responsible for the production of polysaccharide intercellular adhesin (PIA), a major contributor to biofilm formation in S.aureus (PubMed:18156263, PubMed:19251851). Also regulates the expression of thermonuclease (nuc) via the Sae two-component system, by binding directly to the sae P1 promoter region and blocking the binding of the positive regulator SaeR (PubMed:27116338, PubMed:29378891). It restrains Sae-dependent production of leukocidins (PubMed:29378891). CodY also controls the sae locus indirectly through Agr and Rot-mediated repression of the sae P1 promoter (PubMed:29378891). The virulence genes regulated by CodY fall into three groups: one group is regulated directly by CodY, a second group is indirectly regulated by CodY, in particular through its repression of the agr and sae loci, and a third group is regulated in two ways, by direct repression and by repression via another regulator (PubMed:19251851, PubMed:20363936, PubMed:29378891). S.aureus may use CodY to limit host damage to only the most severe starvation conditions (PubMed:27116338). Modulation of central metabolism, virulence gene expression, and biofilm-associated genes to optimize growth on preferred carbon sources until starvation sets in may require coordinated action of CodY and the carbon catabolite protein A (CcpA), another global transcriptional regulator (PubMed:35735992).</text>
</comment>
<comment type="activity regulation">
    <text evidence="3 4 5 6">Activity of CodY is modulated by interaction with two types of effectors: the branched-chain amino acids (BCAAs) leucine, isoleucine and valine, which are signals of the nutritional status of the cell, and GTP, which may signal the energetic status of the cell (PubMed:20363936, PubMed:27116338, PubMed:29357354). GTP and the BCAAs act additively to increase the affinity of CodY for DNA (PubMed:20363936). Isoleucine could be a major signal for CodY regulation in comparison to other BCAAs (PubMed:19251851, PubMed:29357354).</text>
</comment>
<comment type="subcellular location">
    <subcellularLocation>
        <location evidence="1 10">Cytoplasm</location>
    </subcellularLocation>
</comment>
<comment type="disruption phenotype">
    <text evidence="2 3 8">Disruption of the gene in two clinical isolates, SA564 and UAMS-1, results in the overexpression of several virulence genes (PubMed:18156263). The mutant strains have higher levels of hemolytic activity toward rabbit erythrocytes in their culture fluid, show derepressed transcription of the accessory gene regulator (agr) locus, and derepressed PIA-dependent biofilm formation (PubMed:18156263). Disruption results in a robust structured biofilm tethered together with eDNA and PIA (PubMed:35735992). Mutants from unrelated strains Newman, UAMS-1 and RN1HG grow more slowly than their parent strains in a chemically defined medium, but only codY mutants are able to grow in medium lacking threonine (PubMed:19251851).</text>
</comment>
<comment type="similarity">
    <text evidence="1">Belongs to the CodY family.</text>
</comment>
<name>CODY_STAA8</name>
<proteinExistence type="evidence at protein level"/>
<reference key="1">
    <citation type="book" date="2006" name="Gram positive pathogens, 2nd edition">
        <title>The Staphylococcus aureus NCTC 8325 genome.</title>
        <editorList>
            <person name="Fischetti V."/>
            <person name="Novick R."/>
            <person name="Ferretti J."/>
            <person name="Portnoy D."/>
            <person name="Rood J."/>
        </editorList>
        <authorList>
            <person name="Gillaspy A.F."/>
            <person name="Worrell V."/>
            <person name="Orvis J."/>
            <person name="Roe B.A."/>
            <person name="Dyer D.W."/>
            <person name="Iandolo J.J."/>
        </authorList>
    </citation>
    <scope>NUCLEOTIDE SEQUENCE [LARGE SCALE GENOMIC DNA]</scope>
    <source>
        <strain>NCTC 8325 / PS 47</strain>
    </source>
</reference>
<reference key="2">
    <citation type="journal article" date="2008" name="J. Bacteriol.">
        <title>Staphylococcus aureus CodY negatively regulates virulence gene expression.</title>
        <authorList>
            <person name="Majerczyk C.D."/>
            <person name="Sadykov M.R."/>
            <person name="Luong T.T."/>
            <person name="Lee C."/>
            <person name="Somerville G.A."/>
            <person name="Sonenshein A.L."/>
        </authorList>
    </citation>
    <scope>FUNCTION</scope>
    <scope>DISRUPTION PHENOTYPE</scope>
    <source>
        <strain>clinical isolates</strain>
        <strain>RN4220</strain>
    </source>
</reference>
<reference key="3">
    <citation type="journal article" date="2009" name="J. Bacteriol.">
        <title>CodY in Staphylococcus aureus: a regulatory link between metabolism and virulence gene expression.</title>
        <authorList>
            <person name="Pohl K."/>
            <person name="Francois P."/>
            <person name="Stenz L."/>
            <person name="Schlink F."/>
            <person name="Geiger T."/>
            <person name="Herbert S."/>
            <person name="Goerke C."/>
            <person name="Schrenzel J."/>
            <person name="Wolz C."/>
        </authorList>
    </citation>
    <scope>FUNCTION</scope>
    <scope>ACTIVITY REGULATION BY ISOLEUCINE</scope>
    <scope>DISRUPTION PHENOTYPE</scope>
    <source>
        <strain>Newman</strain>
        <strain>RN1HG</strain>
        <strain>UAMS-1</strain>
    </source>
</reference>
<reference key="4">
    <citation type="journal article" date="2009" name="J. Bacteriol.">
        <authorList>
            <person name="Pohl K."/>
            <person name="Francois P."/>
            <person name="Stenz L."/>
            <person name="Schlink F."/>
            <person name="Geiger T."/>
            <person name="Herbert S."/>
            <person name="Goerke C."/>
            <person name="Schrenzel J."/>
            <person name="Wolz C."/>
        </authorList>
    </citation>
    <scope>ERRATUM OF PUBMED:19251851</scope>
</reference>
<reference key="5">
    <citation type="journal article" date="2010" name="J. Bacteriol.">
        <title>Direct targets of CodY in Staphylococcus aureus.</title>
        <authorList>
            <person name="Majerczyk C.D."/>
            <person name="Dunman P.M."/>
            <person name="Luong T.T."/>
            <person name="Lee C.Y."/>
            <person name="Sadykov M.R."/>
            <person name="Somerville G.A."/>
            <person name="Bodi K."/>
            <person name="Sonenshein A.L."/>
        </authorList>
    </citation>
    <scope>FUNCTION</scope>
    <scope>DNA-BINDING</scope>
    <scope>ACTIVITY REGULATION</scope>
    <source>
        <strain>NCTC 8325 / PS 47</strain>
        <strain>UAMS-1</strain>
    </source>
</reference>
<reference key="6">
    <citation type="journal article" date="2016" name="Mol. Microbiol.">
        <title>A spectrum of CodY activities drives metabolic reorganization and virulence gene expression in Staphylococcus aureus.</title>
        <authorList>
            <person name="Waters N.R."/>
            <person name="Samuels D.J."/>
            <person name="Behera R.K."/>
            <person name="Livny J."/>
            <person name="Rhee K.Y."/>
            <person name="Sadykov M.R."/>
            <person name="Brinsmade S.R."/>
        </authorList>
    </citation>
    <scope>FUNCTION</scope>
    <scope>ACTIVITY REGULATION</scope>
    <source>
        <strain>UAMS-1</strain>
    </source>
</reference>
<reference key="7">
    <citation type="journal article" date="2018" name="J. Bacteriol.">
        <title>Nutritional regulation of the Sae two-component system by CodY in Staphylococcus aureus.</title>
        <authorList>
            <person name="Mlynek K.D."/>
            <person name="Sause W.E."/>
            <person name="Moormeier D.E."/>
            <person name="Sadykov M.R."/>
            <person name="Hill K.R."/>
            <person name="Torres V.J."/>
            <person name="Bayles K.W."/>
            <person name="Brinsmade S.R."/>
        </authorList>
    </citation>
    <scope>FUNCTION</scope>
</reference>
<reference key="8">
    <citation type="journal article" date="2018" name="PLoS Genet.">
        <title>Repression of branched-chain amino acid synthesis in Staphylococcus aureus is mediated by isoleucine via CodY, and by a leucine-rich attenuator peptide.</title>
        <authorList>
            <person name="Kaiser J.C."/>
            <person name="King A.N."/>
            <person name="Grigg J.C."/>
            <person name="Sheldon J.R."/>
            <person name="Edgell D.R."/>
            <person name="Murphy M.E.P."/>
            <person name="Brinsmade S.R."/>
            <person name="Heinrichs D.E."/>
        </authorList>
    </citation>
    <scope>FUNCTION</scope>
    <scope>ACTIVITY REGULATION</scope>
    <source>
        <strain>RN4220</strain>
        <strain>USA300</strain>
    </source>
</reference>
<reference key="9">
    <citation type="journal article" date="2022" name="J. Bacteriol.">
        <title>Interplay of CodY and CcpA in regulating central metabolism and biofilm formation in Staphylococcus aureus.</title>
        <authorList>
            <person name="Bulock L.L."/>
            <person name="Ahn J."/>
            <person name="Shinde D."/>
            <person name="Pandey S."/>
            <person name="Sarmiento C."/>
            <person name="Thomas V.C."/>
            <person name="Guda C."/>
            <person name="Bayles K.W."/>
            <person name="Sadykov M.R."/>
        </authorList>
    </citation>
    <scope>FUNCTION</scope>
    <scope>DISRUPTION PHENOTYPE</scope>
    <source>
        <strain>UAMS-1</strain>
    </source>
</reference>
<reference key="10">
    <citation type="journal article" date="2017" name="Curr. Genet.">
        <title>CodY, a master integrator of metabolism and virulence in Gram-positive bacteria.</title>
        <authorList>
            <person name="Brinsmade S.R."/>
        </authorList>
    </citation>
    <scope>REVIEW</scope>
</reference>
<dbReference type="EMBL" id="CP000253">
    <property type="protein sequence ID" value="ABD30331.1"/>
    <property type="molecule type" value="Genomic_DNA"/>
</dbReference>
<dbReference type="RefSeq" id="WP_000055337.1">
    <property type="nucleotide sequence ID" value="NZ_LS483365.1"/>
</dbReference>
<dbReference type="RefSeq" id="YP_499763.1">
    <property type="nucleotide sequence ID" value="NC_007795.1"/>
</dbReference>
<dbReference type="PDB" id="8C7S">
    <property type="method" value="X-ray"/>
    <property type="resolution" value="3.05 A"/>
    <property type="chains" value="A/B=1-256"/>
</dbReference>
<dbReference type="PDBsum" id="8C7S"/>
<dbReference type="SMR" id="Q2FZ27"/>
<dbReference type="STRING" id="93061.SAOUHSC_01228"/>
<dbReference type="PaxDb" id="1280-SAXN108_1257"/>
<dbReference type="GeneID" id="3920255"/>
<dbReference type="KEGG" id="sao:SAOUHSC_01228"/>
<dbReference type="PATRIC" id="fig|93061.5.peg.1125"/>
<dbReference type="eggNOG" id="COG4465">
    <property type="taxonomic scope" value="Bacteria"/>
</dbReference>
<dbReference type="HOGENOM" id="CLU_089581_0_0_9"/>
<dbReference type="OrthoDB" id="2056at2"/>
<dbReference type="PHI-base" id="PHI:10203"/>
<dbReference type="PRO" id="PR:Q2FZ27"/>
<dbReference type="Proteomes" id="UP000008816">
    <property type="component" value="Chromosome"/>
</dbReference>
<dbReference type="GO" id="GO:0005737">
    <property type="term" value="C:cytoplasm"/>
    <property type="evidence" value="ECO:0007669"/>
    <property type="project" value="UniProtKB-SubCell"/>
</dbReference>
<dbReference type="GO" id="GO:0003677">
    <property type="term" value="F:DNA binding"/>
    <property type="evidence" value="ECO:0007669"/>
    <property type="project" value="UniProtKB-UniRule"/>
</dbReference>
<dbReference type="GO" id="GO:0003700">
    <property type="term" value="F:DNA-binding transcription factor activity"/>
    <property type="evidence" value="ECO:0007669"/>
    <property type="project" value="InterPro"/>
</dbReference>
<dbReference type="GO" id="GO:0005525">
    <property type="term" value="F:GTP binding"/>
    <property type="evidence" value="ECO:0007669"/>
    <property type="project" value="UniProtKB-KW"/>
</dbReference>
<dbReference type="GO" id="GO:0045892">
    <property type="term" value="P:negative regulation of DNA-templated transcription"/>
    <property type="evidence" value="ECO:0007669"/>
    <property type="project" value="UniProtKB-UniRule"/>
</dbReference>
<dbReference type="GO" id="GO:0006355">
    <property type="term" value="P:regulation of DNA-templated transcription"/>
    <property type="evidence" value="ECO:0000318"/>
    <property type="project" value="GO_Central"/>
</dbReference>
<dbReference type="FunFam" id="1.10.10.10:FF:000034">
    <property type="entry name" value="GTP-sensing transcriptional pleiotropic repressor CodY"/>
    <property type="match status" value="1"/>
</dbReference>
<dbReference type="FunFam" id="3.30.450.40:FF:000003">
    <property type="entry name" value="GTP-sensing transcriptional pleiotropic repressor CodY"/>
    <property type="match status" value="1"/>
</dbReference>
<dbReference type="Gene3D" id="3.30.450.40">
    <property type="match status" value="1"/>
</dbReference>
<dbReference type="Gene3D" id="1.10.10.10">
    <property type="entry name" value="Winged helix-like DNA-binding domain superfamily/Winged helix DNA-binding domain"/>
    <property type="match status" value="1"/>
</dbReference>
<dbReference type="HAMAP" id="MF_00621">
    <property type="entry name" value="HTH_type_CodY"/>
    <property type="match status" value="1"/>
</dbReference>
<dbReference type="InterPro" id="IPR014154">
    <property type="entry name" value="CodY"/>
</dbReference>
<dbReference type="InterPro" id="IPR029016">
    <property type="entry name" value="GAF-like_dom_sf"/>
</dbReference>
<dbReference type="InterPro" id="IPR013198">
    <property type="entry name" value="GTP_trans_reg_CodY_C"/>
</dbReference>
<dbReference type="InterPro" id="IPR010312">
    <property type="entry name" value="Transc_reg_CodY_N"/>
</dbReference>
<dbReference type="InterPro" id="IPR036388">
    <property type="entry name" value="WH-like_DNA-bd_sf"/>
</dbReference>
<dbReference type="InterPro" id="IPR036390">
    <property type="entry name" value="WH_DNA-bd_sf"/>
</dbReference>
<dbReference type="NCBIfam" id="TIGR02787">
    <property type="entry name" value="codY_Gpos"/>
    <property type="match status" value="1"/>
</dbReference>
<dbReference type="NCBIfam" id="NF003170">
    <property type="entry name" value="PRK04158.1"/>
    <property type="match status" value="1"/>
</dbReference>
<dbReference type="PANTHER" id="PTHR40062:SF1">
    <property type="entry name" value="GLOBAL TRANSCRIPTIONAL REGULATOR CODY"/>
    <property type="match status" value="1"/>
</dbReference>
<dbReference type="PANTHER" id="PTHR40062">
    <property type="entry name" value="GTP-SENSING TRANSCRIPTIONAL PLEIOTROPIC REPRESSOR CODY"/>
    <property type="match status" value="1"/>
</dbReference>
<dbReference type="Pfam" id="PF06018">
    <property type="entry name" value="CodY"/>
    <property type="match status" value="1"/>
</dbReference>
<dbReference type="Pfam" id="PF08222">
    <property type="entry name" value="HTH_CodY"/>
    <property type="match status" value="1"/>
</dbReference>
<dbReference type="PIRSF" id="PIRSF011572">
    <property type="entry name" value="GTP_sensing_CodY"/>
    <property type="match status" value="1"/>
</dbReference>
<dbReference type="SUPFAM" id="SSF46785">
    <property type="entry name" value="Winged helix' DNA-binding domain"/>
    <property type="match status" value="1"/>
</dbReference>
<evidence type="ECO:0000255" key="1">
    <source>
        <dbReference type="HAMAP-Rule" id="MF_00621"/>
    </source>
</evidence>
<evidence type="ECO:0000269" key="2">
    <source>
    </source>
</evidence>
<evidence type="ECO:0000269" key="3">
    <source>
    </source>
</evidence>
<evidence type="ECO:0000269" key="4">
    <source>
    </source>
</evidence>
<evidence type="ECO:0000269" key="5">
    <source>
    </source>
</evidence>
<evidence type="ECO:0000269" key="6">
    <source>
    </source>
</evidence>
<evidence type="ECO:0000269" key="7">
    <source>
    </source>
</evidence>
<evidence type="ECO:0000269" key="8">
    <source>
    </source>
</evidence>
<evidence type="ECO:0000303" key="9">
    <source>
    </source>
</evidence>
<evidence type="ECO:0000305" key="10"/>
<organism>
    <name type="scientific">Staphylococcus aureus (strain NCTC 8325 / PS 47)</name>
    <dbReference type="NCBI Taxonomy" id="93061"/>
    <lineage>
        <taxon>Bacteria</taxon>
        <taxon>Bacillati</taxon>
        <taxon>Bacillota</taxon>
        <taxon>Bacilli</taxon>
        <taxon>Bacillales</taxon>
        <taxon>Staphylococcaceae</taxon>
        <taxon>Staphylococcus</taxon>
    </lineage>
</organism>
<protein>
    <recommendedName>
        <fullName evidence="1 10">Global transcriptional regulator CodY</fullName>
    </recommendedName>
</protein>
<sequence length="257" mass="28755">MSLLSKTRELNTLLQKHKGIAVDFKDVAQTISSVTVTNVFIVSRRGKILGSSLNELLKSQRIIQMLEERHIPSEYTERLMEVKQTESNIDIDNVLTVFPPENRELFIDSRTTIFPILGGGERLGTLVLGRVHDDFNENDLVLGEYAATVIGMEILREKHSEVEKEARDKAAITMAINSLSYSEKEAIEHIFEELGGTEGLLIASKVADRVGITRSVIVNALRKLESAGVIESRSLGMKGTFIKVKKEKFLDELEKSK</sequence>